<reference key="1">
    <citation type="journal article" date="2006" name="Proc. Natl. Acad. Sci. U.S.A.">
        <title>Molecular genetic anatomy of inter- and intraserotype variation in the human bacterial pathogen group A Streptococcus.</title>
        <authorList>
            <person name="Beres S.B."/>
            <person name="Richter E.W."/>
            <person name="Nagiec M.J."/>
            <person name="Sumby P."/>
            <person name="Porcella S.F."/>
            <person name="DeLeo F.R."/>
            <person name="Musser J.M."/>
        </authorList>
    </citation>
    <scope>NUCLEOTIDE SEQUENCE [LARGE SCALE GENOMIC DNA]</scope>
    <source>
        <strain>MGAS10270</strain>
    </source>
</reference>
<name>NUSB_STRPD</name>
<comment type="function">
    <text evidence="1">Involved in transcription antitermination. Required for transcription of ribosomal RNA (rRNA) genes. Binds specifically to the boxA antiterminator sequence of the ribosomal RNA (rrn) operons.</text>
</comment>
<comment type="similarity">
    <text evidence="1">Belongs to the NusB family.</text>
</comment>
<comment type="sequence caution" evidence="2">
    <conflict type="erroneous initiation">
        <sequence resource="EMBL-CDS" id="ABF34677"/>
    </conflict>
</comment>
<organism>
    <name type="scientific">Streptococcus pyogenes serotype M2 (strain MGAS10270)</name>
    <dbReference type="NCBI Taxonomy" id="370552"/>
    <lineage>
        <taxon>Bacteria</taxon>
        <taxon>Bacillati</taxon>
        <taxon>Bacillota</taxon>
        <taxon>Bacilli</taxon>
        <taxon>Lactobacillales</taxon>
        <taxon>Streptococcaceae</taxon>
        <taxon>Streptococcus</taxon>
    </lineage>
</organism>
<gene>
    <name evidence="1" type="primary">nusB</name>
    <name type="ordered locus">MGAS10270_Spy1612</name>
</gene>
<keyword id="KW-0694">RNA-binding</keyword>
<keyword id="KW-0804">Transcription</keyword>
<keyword id="KW-0889">Transcription antitermination</keyword>
<keyword id="KW-0805">Transcription regulation</keyword>
<dbReference type="EMBL" id="CP000260">
    <property type="protein sequence ID" value="ABF34677.1"/>
    <property type="status" value="ALT_INIT"/>
    <property type="molecule type" value="Genomic_DNA"/>
</dbReference>
<dbReference type="SMR" id="Q1JF82"/>
<dbReference type="KEGG" id="sph:MGAS10270_Spy1612"/>
<dbReference type="HOGENOM" id="CLU_087843_3_2_9"/>
<dbReference type="Proteomes" id="UP000002436">
    <property type="component" value="Chromosome"/>
</dbReference>
<dbReference type="GO" id="GO:0005829">
    <property type="term" value="C:cytosol"/>
    <property type="evidence" value="ECO:0007669"/>
    <property type="project" value="TreeGrafter"/>
</dbReference>
<dbReference type="GO" id="GO:0003723">
    <property type="term" value="F:RNA binding"/>
    <property type="evidence" value="ECO:0007669"/>
    <property type="project" value="UniProtKB-UniRule"/>
</dbReference>
<dbReference type="GO" id="GO:0006353">
    <property type="term" value="P:DNA-templated transcription termination"/>
    <property type="evidence" value="ECO:0007669"/>
    <property type="project" value="UniProtKB-UniRule"/>
</dbReference>
<dbReference type="GO" id="GO:0031564">
    <property type="term" value="P:transcription antitermination"/>
    <property type="evidence" value="ECO:0007669"/>
    <property type="project" value="UniProtKB-KW"/>
</dbReference>
<dbReference type="Gene3D" id="1.10.940.10">
    <property type="entry name" value="NusB-like"/>
    <property type="match status" value="1"/>
</dbReference>
<dbReference type="HAMAP" id="MF_00073">
    <property type="entry name" value="NusB"/>
    <property type="match status" value="1"/>
</dbReference>
<dbReference type="InterPro" id="IPR035926">
    <property type="entry name" value="NusB-like_sf"/>
</dbReference>
<dbReference type="InterPro" id="IPR011605">
    <property type="entry name" value="NusB_fam"/>
</dbReference>
<dbReference type="InterPro" id="IPR006027">
    <property type="entry name" value="NusB_RsmB_TIM44"/>
</dbReference>
<dbReference type="NCBIfam" id="TIGR01951">
    <property type="entry name" value="nusB"/>
    <property type="match status" value="1"/>
</dbReference>
<dbReference type="NCBIfam" id="NF001223">
    <property type="entry name" value="PRK00202.1-1"/>
    <property type="match status" value="1"/>
</dbReference>
<dbReference type="PANTHER" id="PTHR11078:SF3">
    <property type="entry name" value="ANTITERMINATION NUSB DOMAIN-CONTAINING PROTEIN"/>
    <property type="match status" value="1"/>
</dbReference>
<dbReference type="PANTHER" id="PTHR11078">
    <property type="entry name" value="N UTILIZATION SUBSTANCE PROTEIN B-RELATED"/>
    <property type="match status" value="1"/>
</dbReference>
<dbReference type="Pfam" id="PF01029">
    <property type="entry name" value="NusB"/>
    <property type="match status" value="1"/>
</dbReference>
<dbReference type="SUPFAM" id="SSF48013">
    <property type="entry name" value="NusB-like"/>
    <property type="match status" value="1"/>
</dbReference>
<proteinExistence type="inferred from homology"/>
<sequence>MTNSFQNSRRDLRERAFQALFNIEMGAELLAASQFAYGYDKVTREDAQVLELPIFLLSLVTGVNNHKEELDNLISTHLKKGWSLERLTLTDKTLLRLGLFEIKYFDETPDRVALNEIIEVAKKYSDETSAKFINGLLSQYVSEAPSANKS</sequence>
<evidence type="ECO:0000255" key="1">
    <source>
        <dbReference type="HAMAP-Rule" id="MF_00073"/>
    </source>
</evidence>
<evidence type="ECO:0000305" key="2"/>
<accession>Q1JF82</accession>
<feature type="chain" id="PRO_0000265605" description="Transcription antitermination protein NusB">
    <location>
        <begin position="1"/>
        <end position="150"/>
    </location>
</feature>
<protein>
    <recommendedName>
        <fullName evidence="1">Transcription antitermination protein NusB</fullName>
    </recommendedName>
    <alternativeName>
        <fullName evidence="1">Antitermination factor NusB</fullName>
    </alternativeName>
</protein>